<accession>B3WEF5</accession>
<name>CARB_LACCB</name>
<reference key="1">
    <citation type="submission" date="2008-06" db="EMBL/GenBank/DDBJ databases">
        <title>Lactobacillus casei BL23 complete genome sequence.</title>
        <authorList>
            <person name="Maze A."/>
            <person name="Boel G."/>
            <person name="Bourand A."/>
            <person name="Loux V."/>
            <person name="Gibrat J.F."/>
            <person name="Zuniga M."/>
            <person name="Hartke A."/>
            <person name="Deutscher J."/>
        </authorList>
    </citation>
    <scope>NUCLEOTIDE SEQUENCE [LARGE SCALE GENOMIC DNA]</scope>
    <source>
        <strain>BL23</strain>
    </source>
</reference>
<comment type="function">
    <text evidence="1">Large subunit of the glutamine-dependent carbamoyl phosphate synthetase (CPSase). CPSase catalyzes the formation of carbamoyl phosphate from the ammonia moiety of glutamine, carbonate, and phosphate donated by ATP, constituting the first step of 2 biosynthetic pathways, one leading to arginine and/or urea and the other to pyrimidine nucleotides. The large subunit (synthetase) binds the substrates ammonia (free or transferred from glutamine from the small subunit), hydrogencarbonate and ATP and carries out an ATP-coupled ligase reaction, activating hydrogencarbonate by forming carboxy phosphate which reacts with ammonia to form carbamoyl phosphate.</text>
</comment>
<comment type="catalytic activity">
    <reaction evidence="1">
        <text>hydrogencarbonate + L-glutamine + 2 ATP + H2O = carbamoyl phosphate + L-glutamate + 2 ADP + phosphate + 2 H(+)</text>
        <dbReference type="Rhea" id="RHEA:18633"/>
        <dbReference type="ChEBI" id="CHEBI:15377"/>
        <dbReference type="ChEBI" id="CHEBI:15378"/>
        <dbReference type="ChEBI" id="CHEBI:17544"/>
        <dbReference type="ChEBI" id="CHEBI:29985"/>
        <dbReference type="ChEBI" id="CHEBI:30616"/>
        <dbReference type="ChEBI" id="CHEBI:43474"/>
        <dbReference type="ChEBI" id="CHEBI:58228"/>
        <dbReference type="ChEBI" id="CHEBI:58359"/>
        <dbReference type="ChEBI" id="CHEBI:456216"/>
        <dbReference type="EC" id="6.3.5.5"/>
    </reaction>
</comment>
<comment type="catalytic activity">
    <molecule>Carbamoyl phosphate synthase large chain</molecule>
    <reaction evidence="1">
        <text>hydrogencarbonate + NH4(+) + 2 ATP = carbamoyl phosphate + 2 ADP + phosphate + 2 H(+)</text>
        <dbReference type="Rhea" id="RHEA:18029"/>
        <dbReference type="ChEBI" id="CHEBI:15378"/>
        <dbReference type="ChEBI" id="CHEBI:17544"/>
        <dbReference type="ChEBI" id="CHEBI:28938"/>
        <dbReference type="ChEBI" id="CHEBI:30616"/>
        <dbReference type="ChEBI" id="CHEBI:43474"/>
        <dbReference type="ChEBI" id="CHEBI:58228"/>
        <dbReference type="ChEBI" id="CHEBI:456216"/>
        <dbReference type="EC" id="6.3.4.16"/>
    </reaction>
</comment>
<comment type="cofactor">
    <cofactor evidence="1">
        <name>Mg(2+)</name>
        <dbReference type="ChEBI" id="CHEBI:18420"/>
    </cofactor>
    <cofactor evidence="1">
        <name>Mn(2+)</name>
        <dbReference type="ChEBI" id="CHEBI:29035"/>
    </cofactor>
    <text evidence="1">Binds 4 Mg(2+) or Mn(2+) ions per subunit.</text>
</comment>
<comment type="pathway">
    <text evidence="1">Amino-acid biosynthesis; L-arginine biosynthesis; carbamoyl phosphate from bicarbonate: step 1/1.</text>
</comment>
<comment type="pathway">
    <text evidence="1">Pyrimidine metabolism; UMP biosynthesis via de novo pathway; (S)-dihydroorotate from bicarbonate: step 1/3.</text>
</comment>
<comment type="subunit">
    <text evidence="1">Composed of two chains; the small (or glutamine) chain promotes the hydrolysis of glutamine to ammonia, which is used by the large (or ammonia) chain to synthesize carbamoyl phosphate. Tetramer of heterodimers (alpha,beta)4.</text>
</comment>
<comment type="domain">
    <text evidence="1">The large subunit is composed of 2 ATP-grasp domains that are involved in binding the 2 ATP molecules needed for carbamoyl phosphate synthesis. The N-terminal ATP-grasp domain (referred to as the carboxyphosphate synthetic component) catalyzes the ATP-dependent phosphorylation of hydrogencarbonate to carboxyphosphate and the subsequent nucleophilic attack by ammonia to form a carbamate intermediate. The C-terminal ATP-grasp domain (referred to as the carbamoyl phosphate synthetic component) then catalyzes the phosphorylation of carbamate with the second ATP to form the end product carbamoyl phosphate. The reactive and unstable enzyme intermediates are sequentially channeled from one active site to the next through the interior of the protein over a distance of at least 96 A.</text>
</comment>
<comment type="similarity">
    <text evidence="1">Belongs to the CarB family.</text>
</comment>
<protein>
    <recommendedName>
        <fullName evidence="1">Carbamoyl phosphate synthase large chain</fullName>
        <ecNumber evidence="1">6.3.4.16</ecNumber>
        <ecNumber evidence="1">6.3.5.5</ecNumber>
    </recommendedName>
    <alternativeName>
        <fullName evidence="1">Carbamoyl phosphate synthetase ammonia chain</fullName>
    </alternativeName>
</protein>
<sequence>MPKRQDIHKILVIGSGPIIIGQAAEFDYSGTQACLALREEGYEVVLVNSNPATIMTDTEIADRVYIEPLTVEFVSQILRKELPDAILPTIGGQIGLNLAMKLSNTGILDELGIELLGTKLTAIDQAEDRELFKNLMQKLHEPVPESAIANNIEEAQQFADKIGFPVIIRPAFTMGGTGGGIANNEKELAEIAENGLNLSPVTQVLVERSIAGYKEVEFEVMRDAADSAIVVCNMENFDPVGVHTGDSMVFAPTQTLTDKEVQMLRDAALKIIRALKIEGGCNVQFALDRNSFKYYVIEVNPRVSRSSALASKATGYPIAKMAAKIAVGLHLDEIKNPVTKKTWAEFEPALDYVVTKLPRFPFDKFENGDRTLGTQMKATGEVMAIGRTLEESLLKAVRSLEVGLIHPERPAFAKLSDDELSKQIIQANDERLFYLAEAFRRDYTIEEVAELSKMNPFFLDKIKHIVELERELAAHKADLGLLAEVKRYGFADEEIAKLWGLHADQVRQMRKEQKILPVYKMVDTCAGEFASDTPYYYSTYESSTESVKSDKPSVLVIGSGPIRIGQGVEFDYATVHSVKAIQKAGYEAIIMNSNPETVSTDFSIADKLYFEPLTLEDVLNVIDLEQPEGVIVQFGGQTAINLAEPLANRGIKILGTSVEDLNRAEDRDLFDQVIKSLKLPQPEGGTATDKAGALAVADKIGYPVLVRPSYVLGGRAMEIVHDATELDNYIDRAVSVSHDHPVLIDHYLVGKECEVDCISDGDTVVLPGIMEHIERAGIHSGDSMAVYPPQTFSQDIIDQITDATIKLSRTLNCIGLMNVQFIIHDGKAYVIEVNPRASRTVPFLSKVTNIKLAQVATLAILGLSLKEQGFETGLLPNQSGIHVKSPVFSFSKLNHVDSLLGPEMKSTGEVMGSDTTLAKALYKAFEAAGMHLPQFGRALITVKDADKAEATALAKRFREVGYQLVATSGTAKAFEKAGITVSTIEKLDSGQETILEDIANRKIQLVINTMSADKKVSSDGFRIREAAIEHGVPLMTSLDTAGAILKVLELQAFSISPIKS</sequence>
<feature type="chain" id="PRO_1000138892" description="Carbamoyl phosphate synthase large chain">
    <location>
        <begin position="1"/>
        <end position="1060"/>
    </location>
</feature>
<feature type="domain" description="ATP-grasp 1" evidence="1">
    <location>
        <begin position="133"/>
        <end position="327"/>
    </location>
</feature>
<feature type="domain" description="ATP-grasp 2" evidence="1">
    <location>
        <begin position="671"/>
        <end position="861"/>
    </location>
</feature>
<feature type="domain" description="MGS-like" evidence="1">
    <location>
        <begin position="930"/>
        <end position="1060"/>
    </location>
</feature>
<feature type="region of interest" description="Carboxyphosphate synthetic domain" evidence="1">
    <location>
        <begin position="1"/>
        <end position="401"/>
    </location>
</feature>
<feature type="region of interest" description="Oligomerization domain" evidence="1">
    <location>
        <begin position="402"/>
        <end position="546"/>
    </location>
</feature>
<feature type="region of interest" description="Carbamoyl phosphate synthetic domain" evidence="1">
    <location>
        <begin position="547"/>
        <end position="929"/>
    </location>
</feature>
<feature type="region of interest" description="Allosteric domain" evidence="1">
    <location>
        <begin position="930"/>
        <end position="1060"/>
    </location>
</feature>
<feature type="binding site" evidence="1">
    <location>
        <position position="129"/>
    </location>
    <ligand>
        <name>ATP</name>
        <dbReference type="ChEBI" id="CHEBI:30616"/>
        <label>1</label>
    </ligand>
</feature>
<feature type="binding site" evidence="1">
    <location>
        <position position="169"/>
    </location>
    <ligand>
        <name>ATP</name>
        <dbReference type="ChEBI" id="CHEBI:30616"/>
        <label>1</label>
    </ligand>
</feature>
<feature type="binding site" evidence="1">
    <location>
        <position position="175"/>
    </location>
    <ligand>
        <name>ATP</name>
        <dbReference type="ChEBI" id="CHEBI:30616"/>
        <label>1</label>
    </ligand>
</feature>
<feature type="binding site" evidence="1">
    <location>
        <position position="176"/>
    </location>
    <ligand>
        <name>ATP</name>
        <dbReference type="ChEBI" id="CHEBI:30616"/>
        <label>1</label>
    </ligand>
</feature>
<feature type="binding site" evidence="1">
    <location>
        <position position="208"/>
    </location>
    <ligand>
        <name>ATP</name>
        <dbReference type="ChEBI" id="CHEBI:30616"/>
        <label>1</label>
    </ligand>
</feature>
<feature type="binding site" evidence="1">
    <location>
        <position position="210"/>
    </location>
    <ligand>
        <name>ATP</name>
        <dbReference type="ChEBI" id="CHEBI:30616"/>
        <label>1</label>
    </ligand>
</feature>
<feature type="binding site" evidence="1">
    <location>
        <position position="215"/>
    </location>
    <ligand>
        <name>ATP</name>
        <dbReference type="ChEBI" id="CHEBI:30616"/>
        <label>1</label>
    </ligand>
</feature>
<feature type="binding site" evidence="1">
    <location>
        <position position="241"/>
    </location>
    <ligand>
        <name>ATP</name>
        <dbReference type="ChEBI" id="CHEBI:30616"/>
        <label>1</label>
    </ligand>
</feature>
<feature type="binding site" evidence="1">
    <location>
        <position position="242"/>
    </location>
    <ligand>
        <name>ATP</name>
        <dbReference type="ChEBI" id="CHEBI:30616"/>
        <label>1</label>
    </ligand>
</feature>
<feature type="binding site" evidence="1">
    <location>
        <position position="243"/>
    </location>
    <ligand>
        <name>ATP</name>
        <dbReference type="ChEBI" id="CHEBI:30616"/>
        <label>1</label>
    </ligand>
</feature>
<feature type="binding site" evidence="1">
    <location>
        <position position="284"/>
    </location>
    <ligand>
        <name>ATP</name>
        <dbReference type="ChEBI" id="CHEBI:30616"/>
        <label>1</label>
    </ligand>
</feature>
<feature type="binding site" evidence="1">
    <location>
        <position position="284"/>
    </location>
    <ligand>
        <name>Mg(2+)</name>
        <dbReference type="ChEBI" id="CHEBI:18420"/>
        <label>1</label>
    </ligand>
</feature>
<feature type="binding site" evidence="1">
    <location>
        <position position="284"/>
    </location>
    <ligand>
        <name>Mn(2+)</name>
        <dbReference type="ChEBI" id="CHEBI:29035"/>
        <label>1</label>
    </ligand>
</feature>
<feature type="binding site" evidence="1">
    <location>
        <position position="298"/>
    </location>
    <ligand>
        <name>ATP</name>
        <dbReference type="ChEBI" id="CHEBI:30616"/>
        <label>1</label>
    </ligand>
</feature>
<feature type="binding site" evidence="1">
    <location>
        <position position="298"/>
    </location>
    <ligand>
        <name>Mg(2+)</name>
        <dbReference type="ChEBI" id="CHEBI:18420"/>
        <label>1</label>
    </ligand>
</feature>
<feature type="binding site" evidence="1">
    <location>
        <position position="298"/>
    </location>
    <ligand>
        <name>Mg(2+)</name>
        <dbReference type="ChEBI" id="CHEBI:18420"/>
        <label>2</label>
    </ligand>
</feature>
<feature type="binding site" evidence="1">
    <location>
        <position position="298"/>
    </location>
    <ligand>
        <name>Mn(2+)</name>
        <dbReference type="ChEBI" id="CHEBI:29035"/>
        <label>1</label>
    </ligand>
</feature>
<feature type="binding site" evidence="1">
    <location>
        <position position="298"/>
    </location>
    <ligand>
        <name>Mn(2+)</name>
        <dbReference type="ChEBI" id="CHEBI:29035"/>
        <label>2</label>
    </ligand>
</feature>
<feature type="binding site" evidence="1">
    <location>
        <position position="300"/>
    </location>
    <ligand>
        <name>Mg(2+)</name>
        <dbReference type="ChEBI" id="CHEBI:18420"/>
        <label>2</label>
    </ligand>
</feature>
<feature type="binding site" evidence="1">
    <location>
        <position position="300"/>
    </location>
    <ligand>
        <name>Mn(2+)</name>
        <dbReference type="ChEBI" id="CHEBI:29035"/>
        <label>2</label>
    </ligand>
</feature>
<feature type="binding site" evidence="1">
    <location>
        <position position="707"/>
    </location>
    <ligand>
        <name>ATP</name>
        <dbReference type="ChEBI" id="CHEBI:30616"/>
        <label>2</label>
    </ligand>
</feature>
<feature type="binding site" evidence="1">
    <location>
        <position position="746"/>
    </location>
    <ligand>
        <name>ATP</name>
        <dbReference type="ChEBI" id="CHEBI:30616"/>
        <label>2</label>
    </ligand>
</feature>
<feature type="binding site" evidence="1">
    <location>
        <position position="748"/>
    </location>
    <ligand>
        <name>ATP</name>
        <dbReference type="ChEBI" id="CHEBI:30616"/>
        <label>2</label>
    </ligand>
</feature>
<feature type="binding site" evidence="1">
    <location>
        <position position="752"/>
    </location>
    <ligand>
        <name>ATP</name>
        <dbReference type="ChEBI" id="CHEBI:30616"/>
        <label>2</label>
    </ligand>
</feature>
<feature type="binding site" evidence="1">
    <location>
        <position position="777"/>
    </location>
    <ligand>
        <name>ATP</name>
        <dbReference type="ChEBI" id="CHEBI:30616"/>
        <label>2</label>
    </ligand>
</feature>
<feature type="binding site" evidence="1">
    <location>
        <position position="778"/>
    </location>
    <ligand>
        <name>ATP</name>
        <dbReference type="ChEBI" id="CHEBI:30616"/>
        <label>2</label>
    </ligand>
</feature>
<feature type="binding site" evidence="1">
    <location>
        <position position="779"/>
    </location>
    <ligand>
        <name>ATP</name>
        <dbReference type="ChEBI" id="CHEBI:30616"/>
        <label>2</label>
    </ligand>
</feature>
<feature type="binding site" evidence="1">
    <location>
        <position position="780"/>
    </location>
    <ligand>
        <name>ATP</name>
        <dbReference type="ChEBI" id="CHEBI:30616"/>
        <label>2</label>
    </ligand>
</feature>
<feature type="binding site" evidence="1">
    <location>
        <position position="820"/>
    </location>
    <ligand>
        <name>ATP</name>
        <dbReference type="ChEBI" id="CHEBI:30616"/>
        <label>2</label>
    </ligand>
</feature>
<feature type="binding site" evidence="1">
    <location>
        <position position="820"/>
    </location>
    <ligand>
        <name>Mg(2+)</name>
        <dbReference type="ChEBI" id="CHEBI:18420"/>
        <label>3</label>
    </ligand>
</feature>
<feature type="binding site" evidence="1">
    <location>
        <position position="820"/>
    </location>
    <ligand>
        <name>Mn(2+)</name>
        <dbReference type="ChEBI" id="CHEBI:29035"/>
        <label>3</label>
    </ligand>
</feature>
<feature type="binding site" evidence="1">
    <location>
        <position position="832"/>
    </location>
    <ligand>
        <name>ATP</name>
        <dbReference type="ChEBI" id="CHEBI:30616"/>
        <label>2</label>
    </ligand>
</feature>
<feature type="binding site" evidence="1">
    <location>
        <position position="832"/>
    </location>
    <ligand>
        <name>Mg(2+)</name>
        <dbReference type="ChEBI" id="CHEBI:18420"/>
        <label>3</label>
    </ligand>
</feature>
<feature type="binding site" evidence="1">
    <location>
        <position position="832"/>
    </location>
    <ligand>
        <name>Mg(2+)</name>
        <dbReference type="ChEBI" id="CHEBI:18420"/>
        <label>4</label>
    </ligand>
</feature>
<feature type="binding site" evidence="1">
    <location>
        <position position="832"/>
    </location>
    <ligand>
        <name>Mn(2+)</name>
        <dbReference type="ChEBI" id="CHEBI:29035"/>
        <label>3</label>
    </ligand>
</feature>
<feature type="binding site" evidence="1">
    <location>
        <position position="832"/>
    </location>
    <ligand>
        <name>Mn(2+)</name>
        <dbReference type="ChEBI" id="CHEBI:29035"/>
        <label>4</label>
    </ligand>
</feature>
<feature type="binding site" evidence="1">
    <location>
        <position position="834"/>
    </location>
    <ligand>
        <name>Mg(2+)</name>
        <dbReference type="ChEBI" id="CHEBI:18420"/>
        <label>4</label>
    </ligand>
</feature>
<feature type="binding site" evidence="1">
    <location>
        <position position="834"/>
    </location>
    <ligand>
        <name>Mn(2+)</name>
        <dbReference type="ChEBI" id="CHEBI:29035"/>
        <label>4</label>
    </ligand>
</feature>
<gene>
    <name evidence="1" type="primary">carB</name>
    <name type="ordered locus">LCABL_16750</name>
</gene>
<dbReference type="EC" id="6.3.4.16" evidence="1"/>
<dbReference type="EC" id="6.3.5.5" evidence="1"/>
<dbReference type="EMBL" id="FM177140">
    <property type="protein sequence ID" value="CAQ66756.1"/>
    <property type="molecule type" value="Genomic_DNA"/>
</dbReference>
<dbReference type="SMR" id="B3WEF5"/>
<dbReference type="KEGG" id="lcb:LCABL_16750"/>
<dbReference type="HOGENOM" id="CLU_000513_1_2_9"/>
<dbReference type="UniPathway" id="UPA00068">
    <property type="reaction ID" value="UER00171"/>
</dbReference>
<dbReference type="UniPathway" id="UPA00070">
    <property type="reaction ID" value="UER00115"/>
</dbReference>
<dbReference type="GO" id="GO:0005737">
    <property type="term" value="C:cytoplasm"/>
    <property type="evidence" value="ECO:0007669"/>
    <property type="project" value="TreeGrafter"/>
</dbReference>
<dbReference type="GO" id="GO:0005524">
    <property type="term" value="F:ATP binding"/>
    <property type="evidence" value="ECO:0007669"/>
    <property type="project" value="UniProtKB-UniRule"/>
</dbReference>
<dbReference type="GO" id="GO:0004087">
    <property type="term" value="F:carbamoyl-phosphate synthase (ammonia) activity"/>
    <property type="evidence" value="ECO:0007669"/>
    <property type="project" value="RHEA"/>
</dbReference>
<dbReference type="GO" id="GO:0004088">
    <property type="term" value="F:carbamoyl-phosphate synthase (glutamine-hydrolyzing) activity"/>
    <property type="evidence" value="ECO:0007669"/>
    <property type="project" value="UniProtKB-UniRule"/>
</dbReference>
<dbReference type="GO" id="GO:0046872">
    <property type="term" value="F:metal ion binding"/>
    <property type="evidence" value="ECO:0007669"/>
    <property type="project" value="UniProtKB-KW"/>
</dbReference>
<dbReference type="GO" id="GO:0044205">
    <property type="term" value="P:'de novo' UMP biosynthetic process"/>
    <property type="evidence" value="ECO:0007669"/>
    <property type="project" value="UniProtKB-UniRule"/>
</dbReference>
<dbReference type="GO" id="GO:0006541">
    <property type="term" value="P:glutamine metabolic process"/>
    <property type="evidence" value="ECO:0007669"/>
    <property type="project" value="TreeGrafter"/>
</dbReference>
<dbReference type="GO" id="GO:0006526">
    <property type="term" value="P:L-arginine biosynthetic process"/>
    <property type="evidence" value="ECO:0007669"/>
    <property type="project" value="UniProtKB-UniRule"/>
</dbReference>
<dbReference type="CDD" id="cd01424">
    <property type="entry name" value="MGS_CPS_II"/>
    <property type="match status" value="1"/>
</dbReference>
<dbReference type="FunFam" id="1.10.1030.10:FF:000002">
    <property type="entry name" value="Carbamoyl-phosphate synthase large chain"/>
    <property type="match status" value="1"/>
</dbReference>
<dbReference type="FunFam" id="3.30.1490.20:FF:000001">
    <property type="entry name" value="Carbamoyl-phosphate synthase large chain"/>
    <property type="match status" value="1"/>
</dbReference>
<dbReference type="FunFam" id="3.30.470.20:FF:000001">
    <property type="entry name" value="Carbamoyl-phosphate synthase large chain"/>
    <property type="match status" value="1"/>
</dbReference>
<dbReference type="FunFam" id="3.30.470.20:FF:000026">
    <property type="entry name" value="Carbamoyl-phosphate synthase large chain"/>
    <property type="match status" value="1"/>
</dbReference>
<dbReference type="FunFam" id="3.40.50.20:FF:000001">
    <property type="entry name" value="Carbamoyl-phosphate synthase large chain"/>
    <property type="match status" value="2"/>
</dbReference>
<dbReference type="Gene3D" id="3.40.50.20">
    <property type="match status" value="2"/>
</dbReference>
<dbReference type="Gene3D" id="3.30.1490.20">
    <property type="entry name" value="ATP-grasp fold, A domain"/>
    <property type="match status" value="1"/>
</dbReference>
<dbReference type="Gene3D" id="3.30.470.20">
    <property type="entry name" value="ATP-grasp fold, B domain"/>
    <property type="match status" value="2"/>
</dbReference>
<dbReference type="Gene3D" id="1.10.1030.10">
    <property type="entry name" value="Carbamoyl-phosphate synthetase, large subunit oligomerisation domain"/>
    <property type="match status" value="1"/>
</dbReference>
<dbReference type="Gene3D" id="3.40.50.1380">
    <property type="entry name" value="Methylglyoxal synthase-like domain"/>
    <property type="match status" value="1"/>
</dbReference>
<dbReference type="HAMAP" id="MF_01210_A">
    <property type="entry name" value="CPSase_L_chain_A"/>
    <property type="match status" value="1"/>
</dbReference>
<dbReference type="HAMAP" id="MF_01210_B">
    <property type="entry name" value="CPSase_L_chain_B"/>
    <property type="match status" value="1"/>
</dbReference>
<dbReference type="InterPro" id="IPR011761">
    <property type="entry name" value="ATP-grasp"/>
</dbReference>
<dbReference type="InterPro" id="IPR013815">
    <property type="entry name" value="ATP_grasp_subdomain_1"/>
</dbReference>
<dbReference type="InterPro" id="IPR006275">
    <property type="entry name" value="CarbamoylP_synth_lsu"/>
</dbReference>
<dbReference type="InterPro" id="IPR005480">
    <property type="entry name" value="CarbamoylP_synth_lsu_oligo"/>
</dbReference>
<dbReference type="InterPro" id="IPR036897">
    <property type="entry name" value="CarbamoylP_synth_lsu_oligo_sf"/>
</dbReference>
<dbReference type="InterPro" id="IPR005479">
    <property type="entry name" value="CbamoylP_synth_lsu-like_ATP-bd"/>
</dbReference>
<dbReference type="InterPro" id="IPR005483">
    <property type="entry name" value="CbamoylP_synth_lsu_CPSase_dom"/>
</dbReference>
<dbReference type="InterPro" id="IPR011607">
    <property type="entry name" value="MGS-like_dom"/>
</dbReference>
<dbReference type="InterPro" id="IPR036914">
    <property type="entry name" value="MGS-like_dom_sf"/>
</dbReference>
<dbReference type="InterPro" id="IPR033937">
    <property type="entry name" value="MGS_CPS_CarB"/>
</dbReference>
<dbReference type="InterPro" id="IPR016185">
    <property type="entry name" value="PreATP-grasp_dom_sf"/>
</dbReference>
<dbReference type="NCBIfam" id="TIGR01369">
    <property type="entry name" value="CPSaseII_lrg"/>
    <property type="match status" value="1"/>
</dbReference>
<dbReference type="NCBIfam" id="NF003671">
    <property type="entry name" value="PRK05294.1"/>
    <property type="match status" value="1"/>
</dbReference>
<dbReference type="NCBIfam" id="NF009455">
    <property type="entry name" value="PRK12815.1"/>
    <property type="match status" value="1"/>
</dbReference>
<dbReference type="PANTHER" id="PTHR11405:SF53">
    <property type="entry name" value="CARBAMOYL-PHOSPHATE SYNTHASE [AMMONIA], MITOCHONDRIAL"/>
    <property type="match status" value="1"/>
</dbReference>
<dbReference type="PANTHER" id="PTHR11405">
    <property type="entry name" value="CARBAMOYLTRANSFERASE FAMILY MEMBER"/>
    <property type="match status" value="1"/>
</dbReference>
<dbReference type="Pfam" id="PF02786">
    <property type="entry name" value="CPSase_L_D2"/>
    <property type="match status" value="2"/>
</dbReference>
<dbReference type="Pfam" id="PF02787">
    <property type="entry name" value="CPSase_L_D3"/>
    <property type="match status" value="1"/>
</dbReference>
<dbReference type="Pfam" id="PF02142">
    <property type="entry name" value="MGS"/>
    <property type="match status" value="1"/>
</dbReference>
<dbReference type="PRINTS" id="PR00098">
    <property type="entry name" value="CPSASE"/>
</dbReference>
<dbReference type="SMART" id="SM01096">
    <property type="entry name" value="CPSase_L_D3"/>
    <property type="match status" value="1"/>
</dbReference>
<dbReference type="SMART" id="SM01209">
    <property type="entry name" value="GARS_A"/>
    <property type="match status" value="1"/>
</dbReference>
<dbReference type="SMART" id="SM00851">
    <property type="entry name" value="MGS"/>
    <property type="match status" value="1"/>
</dbReference>
<dbReference type="SUPFAM" id="SSF48108">
    <property type="entry name" value="Carbamoyl phosphate synthetase, large subunit connection domain"/>
    <property type="match status" value="1"/>
</dbReference>
<dbReference type="SUPFAM" id="SSF56059">
    <property type="entry name" value="Glutathione synthetase ATP-binding domain-like"/>
    <property type="match status" value="2"/>
</dbReference>
<dbReference type="SUPFAM" id="SSF52335">
    <property type="entry name" value="Methylglyoxal synthase-like"/>
    <property type="match status" value="1"/>
</dbReference>
<dbReference type="SUPFAM" id="SSF52440">
    <property type="entry name" value="PreATP-grasp domain"/>
    <property type="match status" value="2"/>
</dbReference>
<dbReference type="PROSITE" id="PS50975">
    <property type="entry name" value="ATP_GRASP"/>
    <property type="match status" value="2"/>
</dbReference>
<dbReference type="PROSITE" id="PS00866">
    <property type="entry name" value="CPSASE_1"/>
    <property type="match status" value="2"/>
</dbReference>
<dbReference type="PROSITE" id="PS00867">
    <property type="entry name" value="CPSASE_2"/>
    <property type="match status" value="2"/>
</dbReference>
<dbReference type="PROSITE" id="PS51855">
    <property type="entry name" value="MGS"/>
    <property type="match status" value="1"/>
</dbReference>
<evidence type="ECO:0000255" key="1">
    <source>
        <dbReference type="HAMAP-Rule" id="MF_01210"/>
    </source>
</evidence>
<keyword id="KW-0028">Amino-acid biosynthesis</keyword>
<keyword id="KW-0055">Arginine biosynthesis</keyword>
<keyword id="KW-0067">ATP-binding</keyword>
<keyword id="KW-0436">Ligase</keyword>
<keyword id="KW-0460">Magnesium</keyword>
<keyword id="KW-0464">Manganese</keyword>
<keyword id="KW-0479">Metal-binding</keyword>
<keyword id="KW-0547">Nucleotide-binding</keyword>
<keyword id="KW-0665">Pyrimidine biosynthesis</keyword>
<keyword id="KW-0677">Repeat</keyword>
<proteinExistence type="inferred from homology"/>
<organism>
    <name type="scientific">Lacticaseibacillus casei (strain BL23)</name>
    <name type="common">Lactobacillus casei</name>
    <dbReference type="NCBI Taxonomy" id="543734"/>
    <lineage>
        <taxon>Bacteria</taxon>
        <taxon>Bacillati</taxon>
        <taxon>Bacillota</taxon>
        <taxon>Bacilli</taxon>
        <taxon>Lactobacillales</taxon>
        <taxon>Lactobacillaceae</taxon>
        <taxon>Lacticaseibacillus</taxon>
    </lineage>
</organism>